<gene>
    <name evidence="1" type="primary">tpm</name>
    <name type="ordered locus">Bpet3841</name>
</gene>
<name>TPMT_BORPD</name>
<feature type="chain" id="PRO_1000134076" description="Thiopurine S-methyltransferase">
    <location>
        <begin position="1"/>
        <end position="219"/>
    </location>
</feature>
<feature type="binding site" evidence="1">
    <location>
        <position position="10"/>
    </location>
    <ligand>
        <name>S-adenosyl-L-methionine</name>
        <dbReference type="ChEBI" id="CHEBI:59789"/>
    </ligand>
</feature>
<feature type="binding site" evidence="1">
    <location>
        <position position="45"/>
    </location>
    <ligand>
        <name>S-adenosyl-L-methionine</name>
        <dbReference type="ChEBI" id="CHEBI:59789"/>
    </ligand>
</feature>
<feature type="binding site" evidence="1">
    <location>
        <position position="66"/>
    </location>
    <ligand>
        <name>S-adenosyl-L-methionine</name>
        <dbReference type="ChEBI" id="CHEBI:59789"/>
    </ligand>
</feature>
<feature type="binding site" evidence="1">
    <location>
        <position position="123"/>
    </location>
    <ligand>
        <name>S-adenosyl-L-methionine</name>
        <dbReference type="ChEBI" id="CHEBI:59789"/>
    </ligand>
</feature>
<reference key="1">
    <citation type="journal article" date="2008" name="BMC Genomics">
        <title>The missing link: Bordetella petrii is endowed with both the metabolic versatility of environmental bacteria and virulence traits of pathogenic Bordetellae.</title>
        <authorList>
            <person name="Gross R."/>
            <person name="Guzman C.A."/>
            <person name="Sebaihia M."/>
            <person name="Martin dos Santos V.A.P."/>
            <person name="Pieper D.H."/>
            <person name="Koebnik R."/>
            <person name="Lechner M."/>
            <person name="Bartels D."/>
            <person name="Buhrmester J."/>
            <person name="Choudhuri J.V."/>
            <person name="Ebensen T."/>
            <person name="Gaigalat L."/>
            <person name="Herrmann S."/>
            <person name="Khachane A.N."/>
            <person name="Larisch C."/>
            <person name="Link S."/>
            <person name="Linke B."/>
            <person name="Meyer F."/>
            <person name="Mormann S."/>
            <person name="Nakunst D."/>
            <person name="Rueckert C."/>
            <person name="Schneiker-Bekel S."/>
            <person name="Schulze K."/>
            <person name="Voerholter F.-J."/>
            <person name="Yevsa T."/>
            <person name="Engle J.T."/>
            <person name="Goldman W.E."/>
            <person name="Puehler A."/>
            <person name="Goebel U.B."/>
            <person name="Goesmann A."/>
            <person name="Bloecker H."/>
            <person name="Kaiser O."/>
            <person name="Martinez-Arias R."/>
        </authorList>
    </citation>
    <scope>NUCLEOTIDE SEQUENCE [LARGE SCALE GENOMIC DNA]</scope>
    <source>
        <strain>ATCC BAA-461 / DSM 12804 / CCUG 43448</strain>
    </source>
</reference>
<protein>
    <recommendedName>
        <fullName evidence="1">Thiopurine S-methyltransferase</fullName>
        <ecNumber evidence="1">2.1.1.67</ecNumber>
    </recommendedName>
    <alternativeName>
        <fullName evidence="1">Thiopurine methyltransferase</fullName>
    </alternativeName>
</protein>
<accession>A9I3K3</accession>
<proteinExistence type="inferred from homology"/>
<evidence type="ECO:0000255" key="1">
    <source>
        <dbReference type="HAMAP-Rule" id="MF_00812"/>
    </source>
</evidence>
<comment type="catalytic activity">
    <reaction evidence="1">
        <text>S-adenosyl-L-methionine + a thiopurine = S-adenosyl-L-homocysteine + a thiopurine S-methylether.</text>
        <dbReference type="EC" id="2.1.1.67"/>
    </reaction>
</comment>
<comment type="subcellular location">
    <subcellularLocation>
        <location evidence="1">Cytoplasm</location>
    </subcellularLocation>
</comment>
<comment type="similarity">
    <text evidence="1">Belongs to the class I-like SAM-binding methyltransferase superfamily. TPMT family.</text>
</comment>
<sequence length="219" mass="24490">MDAEFWLERWRDGRTHFHQQRVTPLLAKYWPTLQLPPGCRVLVPLCGKTLDMVWLAQQGHQVLGVELSSLAVEQFFAENGLQATVREAGPGTYYSAGDISIYCGDIFDLGADVLGDCVGAFDRAALVALPAAMRPRYARHVYGQLSAAYRGLLITLDYDQSQMDGPPFSVRDDEVQAIYAGHSEAVLIDRRDILSKEPKFAERGLTQLDTLVYRLQRQG</sequence>
<dbReference type="EC" id="2.1.1.67" evidence="1"/>
<dbReference type="EMBL" id="AM902716">
    <property type="protein sequence ID" value="CAP44186.1"/>
    <property type="molecule type" value="Genomic_DNA"/>
</dbReference>
<dbReference type="SMR" id="A9I3K3"/>
<dbReference type="STRING" id="94624.Bpet3841"/>
<dbReference type="KEGG" id="bpt:Bpet3841"/>
<dbReference type="eggNOG" id="COG0500">
    <property type="taxonomic scope" value="Bacteria"/>
</dbReference>
<dbReference type="Proteomes" id="UP000001225">
    <property type="component" value="Chromosome"/>
</dbReference>
<dbReference type="GO" id="GO:0005737">
    <property type="term" value="C:cytoplasm"/>
    <property type="evidence" value="ECO:0007669"/>
    <property type="project" value="UniProtKB-SubCell"/>
</dbReference>
<dbReference type="GO" id="GO:0008119">
    <property type="term" value="F:thiopurine S-methyltransferase activity"/>
    <property type="evidence" value="ECO:0007669"/>
    <property type="project" value="UniProtKB-UniRule"/>
</dbReference>
<dbReference type="GO" id="GO:0032259">
    <property type="term" value="P:methylation"/>
    <property type="evidence" value="ECO:0007669"/>
    <property type="project" value="UniProtKB-KW"/>
</dbReference>
<dbReference type="GO" id="GO:0010038">
    <property type="term" value="P:response to metal ion"/>
    <property type="evidence" value="ECO:0007669"/>
    <property type="project" value="InterPro"/>
</dbReference>
<dbReference type="FunFam" id="3.40.50.150:FF:000101">
    <property type="entry name" value="Thiopurine S-methyltransferase"/>
    <property type="match status" value="1"/>
</dbReference>
<dbReference type="Gene3D" id="3.40.50.150">
    <property type="entry name" value="Vaccinia Virus protein VP39"/>
    <property type="match status" value="1"/>
</dbReference>
<dbReference type="HAMAP" id="MF_00812">
    <property type="entry name" value="Thiopur_methtran"/>
    <property type="match status" value="1"/>
</dbReference>
<dbReference type="InterPro" id="IPR029063">
    <property type="entry name" value="SAM-dependent_MTases_sf"/>
</dbReference>
<dbReference type="InterPro" id="IPR022474">
    <property type="entry name" value="Thiopur_S-MeTfrase_Se/Te_detox"/>
</dbReference>
<dbReference type="InterPro" id="IPR025835">
    <property type="entry name" value="Thiopurine_S-MeTrfase"/>
</dbReference>
<dbReference type="InterPro" id="IPR008854">
    <property type="entry name" value="TPMT"/>
</dbReference>
<dbReference type="NCBIfam" id="NF009732">
    <property type="entry name" value="PRK13255.1"/>
    <property type="match status" value="1"/>
</dbReference>
<dbReference type="NCBIfam" id="TIGR03840">
    <property type="entry name" value="TMPT_Se_Te"/>
    <property type="match status" value="1"/>
</dbReference>
<dbReference type="PANTHER" id="PTHR10259">
    <property type="entry name" value="THIOPURINE S-METHYLTRANSFERASE"/>
    <property type="match status" value="1"/>
</dbReference>
<dbReference type="PANTHER" id="PTHR10259:SF11">
    <property type="entry name" value="THIOPURINE S-METHYLTRANSFERASE"/>
    <property type="match status" value="1"/>
</dbReference>
<dbReference type="Pfam" id="PF05724">
    <property type="entry name" value="TPMT"/>
    <property type="match status" value="1"/>
</dbReference>
<dbReference type="PIRSF" id="PIRSF023956">
    <property type="entry name" value="Thiopurine_S-methyltransferase"/>
    <property type="match status" value="1"/>
</dbReference>
<dbReference type="SUPFAM" id="SSF53335">
    <property type="entry name" value="S-adenosyl-L-methionine-dependent methyltransferases"/>
    <property type="match status" value="1"/>
</dbReference>
<dbReference type="PROSITE" id="PS51585">
    <property type="entry name" value="SAM_MT_TPMT"/>
    <property type="match status" value="1"/>
</dbReference>
<organism>
    <name type="scientific">Bordetella petrii (strain ATCC BAA-461 / DSM 12804 / CCUG 43448)</name>
    <dbReference type="NCBI Taxonomy" id="340100"/>
    <lineage>
        <taxon>Bacteria</taxon>
        <taxon>Pseudomonadati</taxon>
        <taxon>Pseudomonadota</taxon>
        <taxon>Betaproteobacteria</taxon>
        <taxon>Burkholderiales</taxon>
        <taxon>Alcaligenaceae</taxon>
        <taxon>Bordetella</taxon>
    </lineage>
</organism>
<keyword id="KW-0963">Cytoplasm</keyword>
<keyword id="KW-0489">Methyltransferase</keyword>
<keyword id="KW-0949">S-adenosyl-L-methionine</keyword>
<keyword id="KW-0808">Transferase</keyword>